<comment type="function">
    <text evidence="1">Heme chaperone required for the biogenesis of c-type cytochromes. Transiently binds heme delivered by CcmC and transfers the heme to apo-cytochromes in a process facilitated by CcmF and CcmH.</text>
</comment>
<comment type="subcellular location">
    <subcellularLocation>
        <location evidence="1">Cell inner membrane</location>
        <topology evidence="1">Single-pass type II membrane protein</topology>
        <orientation evidence="1">Periplasmic side</orientation>
    </subcellularLocation>
</comment>
<comment type="similarity">
    <text evidence="1">Belongs to the CcmE/CycJ family.</text>
</comment>
<sequence>MNPRRKSRLSVVLFIFLGISVASALVLYALRQNIDLFYTPTEVVNGKNNESHTKPSIGQRIRIGGMVVEGTVERDPKSLKVRFDLNDIGPSVTVIYEGILPDLFREGQGIVAQGVLIEPTVLNATEVLAKHDENYVPPELEAQMQKIHKPMGISDLKNESDRDRQEKQFKEGNQ</sequence>
<protein>
    <recommendedName>
        <fullName evidence="1">Cytochrome c-type biogenesis protein CcmE</fullName>
    </recommendedName>
    <alternativeName>
        <fullName evidence="1">Cytochrome c maturation protein E</fullName>
    </alternativeName>
    <alternativeName>
        <fullName evidence="1">Heme chaperone CcmE</fullName>
    </alternativeName>
</protein>
<reference key="1">
    <citation type="journal article" date="2007" name="J. Bacteriol.">
        <title>Complete genome sequence of Haemophilus somnus (Histophilus somni) strain 129Pt and comparison to Haemophilus ducreyi 35000HP and Haemophilus influenzae Rd.</title>
        <authorList>
            <person name="Challacombe J.F."/>
            <person name="Duncan A.J."/>
            <person name="Brettin T.S."/>
            <person name="Bruce D."/>
            <person name="Chertkov O."/>
            <person name="Detter J.C."/>
            <person name="Han C.S."/>
            <person name="Misra M."/>
            <person name="Richardson P."/>
            <person name="Tapia R."/>
            <person name="Thayer N."/>
            <person name="Xie G."/>
            <person name="Inzana T.J."/>
        </authorList>
    </citation>
    <scope>NUCLEOTIDE SEQUENCE [LARGE SCALE GENOMIC DNA]</scope>
    <source>
        <strain>129Pt</strain>
    </source>
</reference>
<accession>Q0I2F6</accession>
<feature type="chain" id="PRO_1000070817" description="Cytochrome c-type biogenesis protein CcmE">
    <location>
        <begin position="1"/>
        <end position="174"/>
    </location>
</feature>
<feature type="topological domain" description="Cytoplasmic" evidence="1">
    <location>
        <begin position="1"/>
        <end position="8"/>
    </location>
</feature>
<feature type="transmembrane region" description="Helical; Signal-anchor for type II membrane protein" evidence="1">
    <location>
        <begin position="9"/>
        <end position="29"/>
    </location>
</feature>
<feature type="topological domain" description="Periplasmic" evidence="1">
    <location>
        <begin position="30"/>
        <end position="174"/>
    </location>
</feature>
<feature type="region of interest" description="Disordered" evidence="2">
    <location>
        <begin position="149"/>
        <end position="174"/>
    </location>
</feature>
<feature type="compositionally biased region" description="Basic and acidic residues" evidence="2">
    <location>
        <begin position="156"/>
        <end position="174"/>
    </location>
</feature>
<feature type="binding site" description="covalent" evidence="1">
    <location>
        <position position="131"/>
    </location>
    <ligand>
        <name>heme</name>
        <dbReference type="ChEBI" id="CHEBI:30413"/>
    </ligand>
</feature>
<feature type="binding site" description="axial binding residue" evidence="1">
    <location>
        <position position="135"/>
    </location>
    <ligand>
        <name>heme</name>
        <dbReference type="ChEBI" id="CHEBI:30413"/>
    </ligand>
    <ligandPart>
        <name>Fe</name>
        <dbReference type="ChEBI" id="CHEBI:18248"/>
    </ligandPart>
</feature>
<gene>
    <name evidence="1" type="primary">ccmE</name>
    <name evidence="1" type="synonym">cycJ</name>
    <name type="ordered locus">HS_0397</name>
</gene>
<dbReference type="EMBL" id="CP000436">
    <property type="protein sequence ID" value="ABI24675.1"/>
    <property type="molecule type" value="Genomic_DNA"/>
</dbReference>
<dbReference type="SMR" id="Q0I2F6"/>
<dbReference type="KEGG" id="hso:HS_0397"/>
<dbReference type="eggNOG" id="COG2332">
    <property type="taxonomic scope" value="Bacteria"/>
</dbReference>
<dbReference type="HOGENOM" id="CLU_079503_1_0_6"/>
<dbReference type="GO" id="GO:0005886">
    <property type="term" value="C:plasma membrane"/>
    <property type="evidence" value="ECO:0007669"/>
    <property type="project" value="UniProtKB-SubCell"/>
</dbReference>
<dbReference type="GO" id="GO:0020037">
    <property type="term" value="F:heme binding"/>
    <property type="evidence" value="ECO:0007669"/>
    <property type="project" value="InterPro"/>
</dbReference>
<dbReference type="GO" id="GO:0046872">
    <property type="term" value="F:metal ion binding"/>
    <property type="evidence" value="ECO:0007669"/>
    <property type="project" value="UniProtKB-KW"/>
</dbReference>
<dbReference type="GO" id="GO:0017004">
    <property type="term" value="P:cytochrome complex assembly"/>
    <property type="evidence" value="ECO:0007669"/>
    <property type="project" value="UniProtKB-KW"/>
</dbReference>
<dbReference type="FunFam" id="2.40.50.140:FF:000104">
    <property type="entry name" value="Cytochrome c-type biogenesis protein CcmE"/>
    <property type="match status" value="1"/>
</dbReference>
<dbReference type="Gene3D" id="2.40.50.140">
    <property type="entry name" value="Nucleic acid-binding proteins"/>
    <property type="match status" value="1"/>
</dbReference>
<dbReference type="HAMAP" id="MF_01959">
    <property type="entry name" value="CcmE"/>
    <property type="match status" value="1"/>
</dbReference>
<dbReference type="InterPro" id="IPR004329">
    <property type="entry name" value="CcmE"/>
</dbReference>
<dbReference type="InterPro" id="IPR036127">
    <property type="entry name" value="CcmE-like_sf"/>
</dbReference>
<dbReference type="InterPro" id="IPR012340">
    <property type="entry name" value="NA-bd_OB-fold"/>
</dbReference>
<dbReference type="NCBIfam" id="NF009638">
    <property type="entry name" value="PRK13165.1"/>
    <property type="match status" value="1"/>
</dbReference>
<dbReference type="NCBIfam" id="NF009727">
    <property type="entry name" value="PRK13254.1-1"/>
    <property type="match status" value="1"/>
</dbReference>
<dbReference type="NCBIfam" id="NF009729">
    <property type="entry name" value="PRK13254.1-3"/>
    <property type="match status" value="1"/>
</dbReference>
<dbReference type="PANTHER" id="PTHR34128">
    <property type="entry name" value="CYTOCHROME C-TYPE BIOGENESIS PROTEIN CCME HOMOLOG, MITOCHONDRIAL"/>
    <property type="match status" value="1"/>
</dbReference>
<dbReference type="PANTHER" id="PTHR34128:SF2">
    <property type="entry name" value="CYTOCHROME C-TYPE BIOGENESIS PROTEIN CCME HOMOLOG, MITOCHONDRIAL"/>
    <property type="match status" value="1"/>
</dbReference>
<dbReference type="Pfam" id="PF03100">
    <property type="entry name" value="CcmE"/>
    <property type="match status" value="1"/>
</dbReference>
<dbReference type="SUPFAM" id="SSF82093">
    <property type="entry name" value="Heme chaperone CcmE"/>
    <property type="match status" value="1"/>
</dbReference>
<organism>
    <name type="scientific">Histophilus somni (strain 129Pt)</name>
    <name type="common">Haemophilus somnus</name>
    <dbReference type="NCBI Taxonomy" id="205914"/>
    <lineage>
        <taxon>Bacteria</taxon>
        <taxon>Pseudomonadati</taxon>
        <taxon>Pseudomonadota</taxon>
        <taxon>Gammaproteobacteria</taxon>
        <taxon>Pasteurellales</taxon>
        <taxon>Pasteurellaceae</taxon>
        <taxon>Histophilus</taxon>
    </lineage>
</organism>
<evidence type="ECO:0000255" key="1">
    <source>
        <dbReference type="HAMAP-Rule" id="MF_01959"/>
    </source>
</evidence>
<evidence type="ECO:0000256" key="2">
    <source>
        <dbReference type="SAM" id="MobiDB-lite"/>
    </source>
</evidence>
<keyword id="KW-0997">Cell inner membrane</keyword>
<keyword id="KW-1003">Cell membrane</keyword>
<keyword id="KW-0201">Cytochrome c-type biogenesis</keyword>
<keyword id="KW-0349">Heme</keyword>
<keyword id="KW-0408">Iron</keyword>
<keyword id="KW-0472">Membrane</keyword>
<keyword id="KW-0479">Metal-binding</keyword>
<keyword id="KW-0735">Signal-anchor</keyword>
<keyword id="KW-0812">Transmembrane</keyword>
<keyword id="KW-1133">Transmembrane helix</keyword>
<proteinExistence type="inferred from homology"/>
<name>CCME_HISS1</name>